<name>GLPK_PSEP1</name>
<evidence type="ECO:0000255" key="1">
    <source>
        <dbReference type="HAMAP-Rule" id="MF_00186"/>
    </source>
</evidence>
<dbReference type="EC" id="2.7.1.30" evidence="1"/>
<dbReference type="EMBL" id="CP000712">
    <property type="protein sequence ID" value="ABQ77277.1"/>
    <property type="molecule type" value="Genomic_DNA"/>
</dbReference>
<dbReference type="SMR" id="A5VZG7"/>
<dbReference type="KEGG" id="ppf:Pput_1116"/>
<dbReference type="eggNOG" id="COG0554">
    <property type="taxonomic scope" value="Bacteria"/>
</dbReference>
<dbReference type="HOGENOM" id="CLU_009281_2_3_6"/>
<dbReference type="UniPathway" id="UPA00618">
    <property type="reaction ID" value="UER00672"/>
</dbReference>
<dbReference type="GO" id="GO:0005829">
    <property type="term" value="C:cytosol"/>
    <property type="evidence" value="ECO:0007669"/>
    <property type="project" value="TreeGrafter"/>
</dbReference>
<dbReference type="GO" id="GO:0005524">
    <property type="term" value="F:ATP binding"/>
    <property type="evidence" value="ECO:0007669"/>
    <property type="project" value="UniProtKB-UniRule"/>
</dbReference>
<dbReference type="GO" id="GO:0004370">
    <property type="term" value="F:glycerol kinase activity"/>
    <property type="evidence" value="ECO:0000250"/>
    <property type="project" value="UniProtKB"/>
</dbReference>
<dbReference type="GO" id="GO:0019563">
    <property type="term" value="P:glycerol catabolic process"/>
    <property type="evidence" value="ECO:0007669"/>
    <property type="project" value="UniProtKB-UniRule"/>
</dbReference>
<dbReference type="GO" id="GO:0006071">
    <property type="term" value="P:glycerol metabolic process"/>
    <property type="evidence" value="ECO:0000250"/>
    <property type="project" value="UniProtKB"/>
</dbReference>
<dbReference type="GO" id="GO:0006072">
    <property type="term" value="P:glycerol-3-phosphate metabolic process"/>
    <property type="evidence" value="ECO:0007669"/>
    <property type="project" value="InterPro"/>
</dbReference>
<dbReference type="CDD" id="cd07786">
    <property type="entry name" value="FGGY_EcGK_like"/>
    <property type="match status" value="1"/>
</dbReference>
<dbReference type="FunFam" id="3.30.420.40:FF:000007">
    <property type="entry name" value="Glycerol kinase"/>
    <property type="match status" value="1"/>
</dbReference>
<dbReference type="FunFam" id="3.30.420.40:FF:000008">
    <property type="entry name" value="Glycerol kinase"/>
    <property type="match status" value="1"/>
</dbReference>
<dbReference type="Gene3D" id="3.30.420.40">
    <property type="match status" value="2"/>
</dbReference>
<dbReference type="HAMAP" id="MF_00186">
    <property type="entry name" value="Glycerol_kin"/>
    <property type="match status" value="1"/>
</dbReference>
<dbReference type="InterPro" id="IPR043129">
    <property type="entry name" value="ATPase_NBD"/>
</dbReference>
<dbReference type="InterPro" id="IPR000577">
    <property type="entry name" value="Carb_kinase_FGGY"/>
</dbReference>
<dbReference type="InterPro" id="IPR018483">
    <property type="entry name" value="Carb_kinase_FGGY_CS"/>
</dbReference>
<dbReference type="InterPro" id="IPR018485">
    <property type="entry name" value="FGGY_C"/>
</dbReference>
<dbReference type="InterPro" id="IPR018484">
    <property type="entry name" value="FGGY_N"/>
</dbReference>
<dbReference type="InterPro" id="IPR005999">
    <property type="entry name" value="Glycerol_kin"/>
</dbReference>
<dbReference type="NCBIfam" id="TIGR01311">
    <property type="entry name" value="glycerol_kin"/>
    <property type="match status" value="1"/>
</dbReference>
<dbReference type="NCBIfam" id="NF000756">
    <property type="entry name" value="PRK00047.1"/>
    <property type="match status" value="1"/>
</dbReference>
<dbReference type="PANTHER" id="PTHR10196:SF69">
    <property type="entry name" value="GLYCEROL KINASE"/>
    <property type="match status" value="1"/>
</dbReference>
<dbReference type="PANTHER" id="PTHR10196">
    <property type="entry name" value="SUGAR KINASE"/>
    <property type="match status" value="1"/>
</dbReference>
<dbReference type="Pfam" id="PF02782">
    <property type="entry name" value="FGGY_C"/>
    <property type="match status" value="1"/>
</dbReference>
<dbReference type="Pfam" id="PF00370">
    <property type="entry name" value="FGGY_N"/>
    <property type="match status" value="1"/>
</dbReference>
<dbReference type="PIRSF" id="PIRSF000538">
    <property type="entry name" value="GlpK"/>
    <property type="match status" value="1"/>
</dbReference>
<dbReference type="SUPFAM" id="SSF53067">
    <property type="entry name" value="Actin-like ATPase domain"/>
    <property type="match status" value="2"/>
</dbReference>
<dbReference type="PROSITE" id="PS00933">
    <property type="entry name" value="FGGY_KINASES_1"/>
    <property type="match status" value="1"/>
</dbReference>
<dbReference type="PROSITE" id="PS00445">
    <property type="entry name" value="FGGY_KINASES_2"/>
    <property type="match status" value="1"/>
</dbReference>
<organism>
    <name type="scientific">Pseudomonas putida (strain ATCC 700007 / DSM 6899 / JCM 31910 / BCRC 17059 / LMG 24140 / F1)</name>
    <dbReference type="NCBI Taxonomy" id="351746"/>
    <lineage>
        <taxon>Bacteria</taxon>
        <taxon>Pseudomonadati</taxon>
        <taxon>Pseudomonadota</taxon>
        <taxon>Gammaproteobacteria</taxon>
        <taxon>Pseudomonadales</taxon>
        <taxon>Pseudomonadaceae</taxon>
        <taxon>Pseudomonas</taxon>
    </lineage>
</organism>
<sequence length="499" mass="55257">MTDTQDKNYIIALDQGTTSSRAIIFDRDANVVGTSQREFAQHYPQAGWVEHDPMEIFATQSATMVEALAQAGISHAQVAALGITNQRETTVVWDKETGRPVYNAIVWQCRRSTEICAQLKRDGHEGYIRETTGLVTDPYFSGTKLKWILDNVDGARERAERGELLFGTIDTWLIWKFTGGKVHVTDYTNASRTLMFNIHSLQWDDKLLQILGIPRQMLPEVRPSSEVYGHTKSGIAIAGIAGDQQSALFGQMCVEPGQAKNTYGTGCFLLMNTGDQAVKSSHGLLTTIACGPRGEVAYALEGAVFNGGSTVQWLRDELKIVNDALDTEYFASKVKDSNGVYLVPAFTGLGAPYWDPYARGALFGLTRGVKVDHIIRAALESIAYQTRDVLDAMQQDCGQRLSELRVDGGAVANNFLMQFQADILGTCVERPQMRETTALGAAYLAGLACGFWSGLDELRDKAIIEREFSPQLDETQKEKLYAGWKKAVERTRDWEDHEA</sequence>
<protein>
    <recommendedName>
        <fullName evidence="1">Glycerol kinase</fullName>
        <ecNumber evidence="1">2.7.1.30</ecNumber>
    </recommendedName>
    <alternativeName>
        <fullName evidence="1">ATP:glycerol 3-phosphotransferase</fullName>
    </alternativeName>
    <alternativeName>
        <fullName evidence="1">Glycerokinase</fullName>
        <shortName evidence="1">GK</shortName>
    </alternativeName>
</protein>
<accession>A5VZG7</accession>
<feature type="chain" id="PRO_1000020761" description="Glycerol kinase">
    <location>
        <begin position="1"/>
        <end position="499"/>
    </location>
</feature>
<feature type="binding site" evidence="1">
    <location>
        <position position="17"/>
    </location>
    <ligand>
        <name>ADP</name>
        <dbReference type="ChEBI" id="CHEBI:456216"/>
    </ligand>
</feature>
<feature type="binding site" evidence="1">
    <location>
        <position position="17"/>
    </location>
    <ligand>
        <name>ATP</name>
        <dbReference type="ChEBI" id="CHEBI:30616"/>
    </ligand>
</feature>
<feature type="binding site" evidence="1">
    <location>
        <position position="17"/>
    </location>
    <ligand>
        <name>sn-glycerol 3-phosphate</name>
        <dbReference type="ChEBI" id="CHEBI:57597"/>
    </ligand>
</feature>
<feature type="binding site" evidence="1">
    <location>
        <position position="18"/>
    </location>
    <ligand>
        <name>ATP</name>
        <dbReference type="ChEBI" id="CHEBI:30616"/>
    </ligand>
</feature>
<feature type="binding site" evidence="1">
    <location>
        <position position="19"/>
    </location>
    <ligand>
        <name>ATP</name>
        <dbReference type="ChEBI" id="CHEBI:30616"/>
    </ligand>
</feature>
<feature type="binding site" evidence="1">
    <location>
        <position position="21"/>
    </location>
    <ligand>
        <name>ADP</name>
        <dbReference type="ChEBI" id="CHEBI:456216"/>
    </ligand>
</feature>
<feature type="binding site" evidence="1">
    <location>
        <position position="87"/>
    </location>
    <ligand>
        <name>glycerol</name>
        <dbReference type="ChEBI" id="CHEBI:17754"/>
    </ligand>
</feature>
<feature type="binding site" evidence="1">
    <location>
        <position position="87"/>
    </location>
    <ligand>
        <name>sn-glycerol 3-phosphate</name>
        <dbReference type="ChEBI" id="CHEBI:57597"/>
    </ligand>
</feature>
<feature type="binding site" evidence="1">
    <location>
        <position position="88"/>
    </location>
    <ligand>
        <name>glycerol</name>
        <dbReference type="ChEBI" id="CHEBI:17754"/>
    </ligand>
</feature>
<feature type="binding site" evidence="1">
    <location>
        <position position="88"/>
    </location>
    <ligand>
        <name>sn-glycerol 3-phosphate</name>
        <dbReference type="ChEBI" id="CHEBI:57597"/>
    </ligand>
</feature>
<feature type="binding site" evidence="1">
    <location>
        <position position="139"/>
    </location>
    <ligand>
        <name>glycerol</name>
        <dbReference type="ChEBI" id="CHEBI:17754"/>
    </ligand>
</feature>
<feature type="binding site" evidence="1">
    <location>
        <position position="139"/>
    </location>
    <ligand>
        <name>sn-glycerol 3-phosphate</name>
        <dbReference type="ChEBI" id="CHEBI:57597"/>
    </ligand>
</feature>
<feature type="binding site" evidence="1">
    <location>
        <position position="243"/>
    </location>
    <ligand>
        <name>glycerol</name>
        <dbReference type="ChEBI" id="CHEBI:17754"/>
    </ligand>
</feature>
<feature type="binding site" evidence="1">
    <location>
        <position position="243"/>
    </location>
    <ligand>
        <name>sn-glycerol 3-phosphate</name>
        <dbReference type="ChEBI" id="CHEBI:57597"/>
    </ligand>
</feature>
<feature type="binding site" evidence="1">
    <location>
        <position position="244"/>
    </location>
    <ligand>
        <name>glycerol</name>
        <dbReference type="ChEBI" id="CHEBI:17754"/>
    </ligand>
</feature>
<feature type="binding site" evidence="1">
    <location>
        <position position="265"/>
    </location>
    <ligand>
        <name>ADP</name>
        <dbReference type="ChEBI" id="CHEBI:456216"/>
    </ligand>
</feature>
<feature type="binding site" evidence="1">
    <location>
        <position position="265"/>
    </location>
    <ligand>
        <name>ATP</name>
        <dbReference type="ChEBI" id="CHEBI:30616"/>
    </ligand>
</feature>
<feature type="binding site" evidence="1">
    <location>
        <position position="308"/>
    </location>
    <ligand>
        <name>ADP</name>
        <dbReference type="ChEBI" id="CHEBI:456216"/>
    </ligand>
</feature>
<feature type="binding site" evidence="1">
    <location>
        <position position="308"/>
    </location>
    <ligand>
        <name>ATP</name>
        <dbReference type="ChEBI" id="CHEBI:30616"/>
    </ligand>
</feature>
<feature type="binding site" evidence="1">
    <location>
        <position position="312"/>
    </location>
    <ligand>
        <name>ATP</name>
        <dbReference type="ChEBI" id="CHEBI:30616"/>
    </ligand>
</feature>
<feature type="binding site" evidence="1">
    <location>
        <position position="409"/>
    </location>
    <ligand>
        <name>ADP</name>
        <dbReference type="ChEBI" id="CHEBI:456216"/>
    </ligand>
</feature>
<feature type="binding site" evidence="1">
    <location>
        <position position="409"/>
    </location>
    <ligand>
        <name>ATP</name>
        <dbReference type="ChEBI" id="CHEBI:30616"/>
    </ligand>
</feature>
<feature type="binding site" evidence="1">
    <location>
        <position position="413"/>
    </location>
    <ligand>
        <name>ADP</name>
        <dbReference type="ChEBI" id="CHEBI:456216"/>
    </ligand>
</feature>
<gene>
    <name evidence="1" type="primary">glpK</name>
    <name type="ordered locus">Pput_1116</name>
</gene>
<keyword id="KW-0067">ATP-binding</keyword>
<keyword id="KW-0319">Glycerol metabolism</keyword>
<keyword id="KW-0418">Kinase</keyword>
<keyword id="KW-0547">Nucleotide-binding</keyword>
<keyword id="KW-0808">Transferase</keyword>
<proteinExistence type="inferred from homology"/>
<comment type="function">
    <text evidence="1">Key enzyme in the regulation of glycerol uptake and metabolism. Catalyzes the phosphorylation of glycerol to yield sn-glycerol 3-phosphate.</text>
</comment>
<comment type="catalytic activity">
    <reaction evidence="1">
        <text>glycerol + ATP = sn-glycerol 3-phosphate + ADP + H(+)</text>
        <dbReference type="Rhea" id="RHEA:21644"/>
        <dbReference type="ChEBI" id="CHEBI:15378"/>
        <dbReference type="ChEBI" id="CHEBI:17754"/>
        <dbReference type="ChEBI" id="CHEBI:30616"/>
        <dbReference type="ChEBI" id="CHEBI:57597"/>
        <dbReference type="ChEBI" id="CHEBI:456216"/>
        <dbReference type="EC" id="2.7.1.30"/>
    </reaction>
</comment>
<comment type="activity regulation">
    <text evidence="1">Inhibited by fructose 1,6-bisphosphate (FBP).</text>
</comment>
<comment type="pathway">
    <text evidence="1">Polyol metabolism; glycerol degradation via glycerol kinase pathway; sn-glycerol 3-phosphate from glycerol: step 1/1.</text>
</comment>
<comment type="similarity">
    <text evidence="1">Belongs to the FGGY kinase family.</text>
</comment>
<reference key="1">
    <citation type="submission" date="2007-05" db="EMBL/GenBank/DDBJ databases">
        <title>Complete sequence of Pseudomonas putida F1.</title>
        <authorList>
            <consortium name="US DOE Joint Genome Institute"/>
            <person name="Copeland A."/>
            <person name="Lucas S."/>
            <person name="Lapidus A."/>
            <person name="Barry K."/>
            <person name="Detter J.C."/>
            <person name="Glavina del Rio T."/>
            <person name="Hammon N."/>
            <person name="Israni S."/>
            <person name="Dalin E."/>
            <person name="Tice H."/>
            <person name="Pitluck S."/>
            <person name="Chain P."/>
            <person name="Malfatti S."/>
            <person name="Shin M."/>
            <person name="Vergez L."/>
            <person name="Schmutz J."/>
            <person name="Larimer F."/>
            <person name="Land M."/>
            <person name="Hauser L."/>
            <person name="Kyrpides N."/>
            <person name="Lykidis A."/>
            <person name="Parales R."/>
            <person name="Richardson P."/>
        </authorList>
    </citation>
    <scope>NUCLEOTIDE SEQUENCE [LARGE SCALE GENOMIC DNA]</scope>
    <source>
        <strain>ATCC 700007 / DSM 6899 / JCM 31910 / BCRC 17059 / LMG 24140 / F1</strain>
    </source>
</reference>